<keyword id="KW-0030">Aminoacyl-tRNA synthetase</keyword>
<keyword id="KW-0067">ATP-binding</keyword>
<keyword id="KW-0963">Cytoplasm</keyword>
<keyword id="KW-0436">Ligase</keyword>
<keyword id="KW-0547">Nucleotide-binding</keyword>
<keyword id="KW-0648">Protein biosynthesis</keyword>
<name>SYR_BRUO2</name>
<feature type="chain" id="PRO_1000017995" description="Arginine--tRNA ligase">
    <location>
        <begin position="1"/>
        <end position="585"/>
    </location>
</feature>
<feature type="short sequence motif" description="'HIGH' region">
    <location>
        <begin position="131"/>
        <end position="141"/>
    </location>
</feature>
<sequence length="585" mass="64971">MNIFADFDARIKKTLQDIDLKPKDGGELDLSRIGVEPPRDASHGDIATNAAMVLSKAVGQNPRELAARIAEALKADEDVESVDVAGPGFINLRLKASYWQRELLVMLNEGTDFGRSRLGAGKKVNVEYVSANPTGPMHVGHCRGAVVGDVLANLLKFAGYDVVKEYYINDAGAQIDVLARSVMLRYREALGESIGEIPAGLYPGDYLVRVGQELAGEFGTKLLEMPEAEALAIVKDRTIDAMMAMIRADLDALNVHHDVFYSERKLHVDHARAIRNAINDLTLKGHVYKGKLPPPKGQLPGDWEDCEQTLFRSTEVGDDIDRPLMKSDGSFTYFAGDVAYFKDKYDRGFNEMIYVLGADHGGYVKRLEAVARAVSDGKAKLTVLLCQLVKLFRNGEPARMSKRAGEFITLRDVVDEVGRDPVRFMMLYRKNDAPLDFDFAKVTEQSKDNPVFYVQYASARCHSVFRQAADQLGLVDLDRVAMGSHFEKLTDESEIALVRKLAEYPRLIESAAIHQEPHRLAFYLYDLASSFHSQWNRGTENPDLRFIKVNDPDLSLARLGLVQVVSDVLTSGLTIIGADAPTEMR</sequence>
<gene>
    <name evidence="1" type="primary">argS</name>
    <name type="ordered locus">BOV_0868</name>
</gene>
<accession>A5VQ54</accession>
<proteinExistence type="inferred from homology"/>
<comment type="catalytic activity">
    <reaction evidence="1">
        <text>tRNA(Arg) + L-arginine + ATP = L-arginyl-tRNA(Arg) + AMP + diphosphate</text>
        <dbReference type="Rhea" id="RHEA:20301"/>
        <dbReference type="Rhea" id="RHEA-COMP:9658"/>
        <dbReference type="Rhea" id="RHEA-COMP:9673"/>
        <dbReference type="ChEBI" id="CHEBI:30616"/>
        <dbReference type="ChEBI" id="CHEBI:32682"/>
        <dbReference type="ChEBI" id="CHEBI:33019"/>
        <dbReference type="ChEBI" id="CHEBI:78442"/>
        <dbReference type="ChEBI" id="CHEBI:78513"/>
        <dbReference type="ChEBI" id="CHEBI:456215"/>
        <dbReference type="EC" id="6.1.1.19"/>
    </reaction>
</comment>
<comment type="subunit">
    <text evidence="1">Monomer.</text>
</comment>
<comment type="subcellular location">
    <subcellularLocation>
        <location evidence="1">Cytoplasm</location>
    </subcellularLocation>
</comment>
<comment type="similarity">
    <text evidence="1">Belongs to the class-I aminoacyl-tRNA synthetase family.</text>
</comment>
<organism>
    <name type="scientific">Brucella ovis (strain ATCC 25840 / 63/290 / NCTC 10512)</name>
    <dbReference type="NCBI Taxonomy" id="444178"/>
    <lineage>
        <taxon>Bacteria</taxon>
        <taxon>Pseudomonadati</taxon>
        <taxon>Pseudomonadota</taxon>
        <taxon>Alphaproteobacteria</taxon>
        <taxon>Hyphomicrobiales</taxon>
        <taxon>Brucellaceae</taxon>
        <taxon>Brucella/Ochrobactrum group</taxon>
        <taxon>Brucella</taxon>
    </lineage>
</organism>
<protein>
    <recommendedName>
        <fullName evidence="1">Arginine--tRNA ligase</fullName>
        <ecNumber evidence="1">6.1.1.19</ecNumber>
    </recommendedName>
    <alternativeName>
        <fullName evidence="1">Arginyl-tRNA synthetase</fullName>
        <shortName evidence="1">ArgRS</shortName>
    </alternativeName>
</protein>
<reference key="1">
    <citation type="journal article" date="2009" name="PLoS ONE">
        <title>Genome degradation in Brucella ovis corresponds with narrowing of its host range and tissue tropism.</title>
        <authorList>
            <person name="Tsolis R.M."/>
            <person name="Seshadri R."/>
            <person name="Santos R.L."/>
            <person name="Sangari F.J."/>
            <person name="Lobo J.M."/>
            <person name="de Jong M.F."/>
            <person name="Ren Q."/>
            <person name="Myers G."/>
            <person name="Brinkac L.M."/>
            <person name="Nelson W.C."/>
            <person name="Deboy R.T."/>
            <person name="Angiuoli S."/>
            <person name="Khouri H."/>
            <person name="Dimitrov G."/>
            <person name="Robinson J.R."/>
            <person name="Mulligan S."/>
            <person name="Walker R.L."/>
            <person name="Elzer P.E."/>
            <person name="Hassan K.A."/>
            <person name="Paulsen I.T."/>
        </authorList>
    </citation>
    <scope>NUCLEOTIDE SEQUENCE [LARGE SCALE GENOMIC DNA]</scope>
    <source>
        <strain>ATCC 25840 / 63/290 / NCTC 10512</strain>
    </source>
</reference>
<evidence type="ECO:0000255" key="1">
    <source>
        <dbReference type="HAMAP-Rule" id="MF_00123"/>
    </source>
</evidence>
<dbReference type="EC" id="6.1.1.19" evidence="1"/>
<dbReference type="EMBL" id="CP000708">
    <property type="protein sequence ID" value="ABQ61922.1"/>
    <property type="molecule type" value="Genomic_DNA"/>
</dbReference>
<dbReference type="RefSeq" id="WP_006012308.1">
    <property type="nucleotide sequence ID" value="NC_009505.1"/>
</dbReference>
<dbReference type="SMR" id="A5VQ54"/>
<dbReference type="GeneID" id="45124303"/>
<dbReference type="KEGG" id="bov:BOV_0868"/>
<dbReference type="HOGENOM" id="CLU_006406_0_1_5"/>
<dbReference type="PhylomeDB" id="A5VQ54"/>
<dbReference type="Proteomes" id="UP000006383">
    <property type="component" value="Chromosome I"/>
</dbReference>
<dbReference type="GO" id="GO:0005737">
    <property type="term" value="C:cytoplasm"/>
    <property type="evidence" value="ECO:0007669"/>
    <property type="project" value="UniProtKB-SubCell"/>
</dbReference>
<dbReference type="GO" id="GO:0004814">
    <property type="term" value="F:arginine-tRNA ligase activity"/>
    <property type="evidence" value="ECO:0007669"/>
    <property type="project" value="UniProtKB-UniRule"/>
</dbReference>
<dbReference type="GO" id="GO:0005524">
    <property type="term" value="F:ATP binding"/>
    <property type="evidence" value="ECO:0007669"/>
    <property type="project" value="UniProtKB-UniRule"/>
</dbReference>
<dbReference type="GO" id="GO:0006420">
    <property type="term" value="P:arginyl-tRNA aminoacylation"/>
    <property type="evidence" value="ECO:0007669"/>
    <property type="project" value="UniProtKB-UniRule"/>
</dbReference>
<dbReference type="CDD" id="cd00671">
    <property type="entry name" value="ArgRS_core"/>
    <property type="match status" value="1"/>
</dbReference>
<dbReference type="Gene3D" id="3.30.1360.70">
    <property type="entry name" value="Arginyl tRNA synthetase N-terminal domain"/>
    <property type="match status" value="1"/>
</dbReference>
<dbReference type="Gene3D" id="3.40.50.620">
    <property type="entry name" value="HUPs"/>
    <property type="match status" value="1"/>
</dbReference>
<dbReference type="Gene3D" id="1.10.730.10">
    <property type="entry name" value="Isoleucyl-tRNA Synthetase, Domain 1"/>
    <property type="match status" value="1"/>
</dbReference>
<dbReference type="HAMAP" id="MF_00123">
    <property type="entry name" value="Arg_tRNA_synth"/>
    <property type="match status" value="1"/>
</dbReference>
<dbReference type="InterPro" id="IPR001412">
    <property type="entry name" value="aa-tRNA-synth_I_CS"/>
</dbReference>
<dbReference type="InterPro" id="IPR001278">
    <property type="entry name" value="Arg-tRNA-ligase"/>
</dbReference>
<dbReference type="InterPro" id="IPR005148">
    <property type="entry name" value="Arg-tRNA-synth_N"/>
</dbReference>
<dbReference type="InterPro" id="IPR036695">
    <property type="entry name" value="Arg-tRNA-synth_N_sf"/>
</dbReference>
<dbReference type="InterPro" id="IPR035684">
    <property type="entry name" value="ArgRS_core"/>
</dbReference>
<dbReference type="InterPro" id="IPR008909">
    <property type="entry name" value="DALR_anticod-bd"/>
</dbReference>
<dbReference type="InterPro" id="IPR014729">
    <property type="entry name" value="Rossmann-like_a/b/a_fold"/>
</dbReference>
<dbReference type="InterPro" id="IPR009080">
    <property type="entry name" value="tRNAsynth_Ia_anticodon-bd"/>
</dbReference>
<dbReference type="NCBIfam" id="TIGR00456">
    <property type="entry name" value="argS"/>
    <property type="match status" value="1"/>
</dbReference>
<dbReference type="PANTHER" id="PTHR11956:SF5">
    <property type="entry name" value="ARGININE--TRNA LIGASE, CYTOPLASMIC"/>
    <property type="match status" value="1"/>
</dbReference>
<dbReference type="PANTHER" id="PTHR11956">
    <property type="entry name" value="ARGINYL-TRNA SYNTHETASE"/>
    <property type="match status" value="1"/>
</dbReference>
<dbReference type="Pfam" id="PF03485">
    <property type="entry name" value="Arg_tRNA_synt_N"/>
    <property type="match status" value="1"/>
</dbReference>
<dbReference type="Pfam" id="PF05746">
    <property type="entry name" value="DALR_1"/>
    <property type="match status" value="1"/>
</dbReference>
<dbReference type="Pfam" id="PF00750">
    <property type="entry name" value="tRNA-synt_1d"/>
    <property type="match status" value="2"/>
</dbReference>
<dbReference type="PRINTS" id="PR01038">
    <property type="entry name" value="TRNASYNTHARG"/>
</dbReference>
<dbReference type="SMART" id="SM01016">
    <property type="entry name" value="Arg_tRNA_synt_N"/>
    <property type="match status" value="1"/>
</dbReference>
<dbReference type="SMART" id="SM00836">
    <property type="entry name" value="DALR_1"/>
    <property type="match status" value="1"/>
</dbReference>
<dbReference type="SUPFAM" id="SSF47323">
    <property type="entry name" value="Anticodon-binding domain of a subclass of class I aminoacyl-tRNA synthetases"/>
    <property type="match status" value="1"/>
</dbReference>
<dbReference type="SUPFAM" id="SSF55190">
    <property type="entry name" value="Arginyl-tRNA synthetase (ArgRS), N-terminal 'additional' domain"/>
    <property type="match status" value="1"/>
</dbReference>
<dbReference type="SUPFAM" id="SSF52374">
    <property type="entry name" value="Nucleotidylyl transferase"/>
    <property type="match status" value="1"/>
</dbReference>
<dbReference type="PROSITE" id="PS00178">
    <property type="entry name" value="AA_TRNA_LIGASE_I"/>
    <property type="match status" value="1"/>
</dbReference>